<evidence type="ECO:0000255" key="1">
    <source>
        <dbReference type="HAMAP-Rule" id="MF_00096"/>
    </source>
</evidence>
<proteinExistence type="inferred from homology"/>
<reference key="1">
    <citation type="journal article" date="2003" name="Nature">
        <title>Unique physiological and pathogenic features of Leptospira interrogans revealed by whole-genome sequencing.</title>
        <authorList>
            <person name="Ren S.-X."/>
            <person name="Fu G."/>
            <person name="Jiang X.-G."/>
            <person name="Zeng R."/>
            <person name="Miao Y.-G."/>
            <person name="Xu H."/>
            <person name="Zhang Y.-X."/>
            <person name="Xiong H."/>
            <person name="Lu G."/>
            <person name="Lu L.-F."/>
            <person name="Jiang H.-Q."/>
            <person name="Jia J."/>
            <person name="Tu Y.-F."/>
            <person name="Jiang J.-X."/>
            <person name="Gu W.-Y."/>
            <person name="Zhang Y.-Q."/>
            <person name="Cai Z."/>
            <person name="Sheng H.-H."/>
            <person name="Yin H.-F."/>
            <person name="Zhang Y."/>
            <person name="Zhu G.-F."/>
            <person name="Wan M."/>
            <person name="Huang H.-L."/>
            <person name="Qian Z."/>
            <person name="Wang S.-Y."/>
            <person name="Ma W."/>
            <person name="Yao Z.-J."/>
            <person name="Shen Y."/>
            <person name="Qiang B.-Q."/>
            <person name="Xia Q.-C."/>
            <person name="Guo X.-K."/>
            <person name="Danchin A."/>
            <person name="Saint Girons I."/>
            <person name="Somerville R.L."/>
            <person name="Wen Y.-M."/>
            <person name="Shi M.-H."/>
            <person name="Chen Z."/>
            <person name="Xu J.-G."/>
            <person name="Zhao G.-P."/>
        </authorList>
    </citation>
    <scope>NUCLEOTIDE SEQUENCE [LARGE SCALE GENOMIC DNA]</scope>
    <source>
        <strain>56601</strain>
    </source>
</reference>
<feature type="chain" id="PRO_0000115107" description="DNA mismatch repair protein MutS">
    <location>
        <begin position="1"/>
        <end position="848"/>
    </location>
</feature>
<feature type="binding site" evidence="1">
    <location>
        <begin position="605"/>
        <end position="612"/>
    </location>
    <ligand>
        <name>ATP</name>
        <dbReference type="ChEBI" id="CHEBI:30616"/>
    </ligand>
</feature>
<name>MUTS_LEPIN</name>
<dbReference type="EMBL" id="AE010300">
    <property type="protein sequence ID" value="AAN49345.1"/>
    <property type="molecule type" value="Genomic_DNA"/>
</dbReference>
<dbReference type="RefSeq" id="NP_712327.1">
    <property type="nucleotide sequence ID" value="NC_004342.2"/>
</dbReference>
<dbReference type="RefSeq" id="WP_001047648.1">
    <property type="nucleotide sequence ID" value="NC_004342.2"/>
</dbReference>
<dbReference type="SMR" id="Q8F496"/>
<dbReference type="FunCoup" id="Q8F496">
    <property type="interactions" value="408"/>
</dbReference>
<dbReference type="STRING" id="189518.LA_2146"/>
<dbReference type="PaxDb" id="189518-LA_2146"/>
<dbReference type="EnsemblBacteria" id="AAN49345">
    <property type="protein sequence ID" value="AAN49345"/>
    <property type="gene ID" value="LA_2146"/>
</dbReference>
<dbReference type="KEGG" id="lil:LA_2146"/>
<dbReference type="PATRIC" id="fig|189518.3.peg.2138"/>
<dbReference type="HOGENOM" id="CLU_002472_3_1_12"/>
<dbReference type="InParanoid" id="Q8F496"/>
<dbReference type="OrthoDB" id="9802448at2"/>
<dbReference type="Proteomes" id="UP000001408">
    <property type="component" value="Chromosome I"/>
</dbReference>
<dbReference type="GO" id="GO:0005829">
    <property type="term" value="C:cytosol"/>
    <property type="evidence" value="ECO:0000318"/>
    <property type="project" value="GO_Central"/>
</dbReference>
<dbReference type="GO" id="GO:0005524">
    <property type="term" value="F:ATP binding"/>
    <property type="evidence" value="ECO:0007669"/>
    <property type="project" value="UniProtKB-UniRule"/>
</dbReference>
<dbReference type="GO" id="GO:0140664">
    <property type="term" value="F:ATP-dependent DNA damage sensor activity"/>
    <property type="evidence" value="ECO:0007669"/>
    <property type="project" value="InterPro"/>
</dbReference>
<dbReference type="GO" id="GO:0003684">
    <property type="term" value="F:damaged DNA binding"/>
    <property type="evidence" value="ECO:0007669"/>
    <property type="project" value="UniProtKB-UniRule"/>
</dbReference>
<dbReference type="GO" id="GO:0030983">
    <property type="term" value="F:mismatched DNA binding"/>
    <property type="evidence" value="ECO:0000318"/>
    <property type="project" value="GO_Central"/>
</dbReference>
<dbReference type="GO" id="GO:0006298">
    <property type="term" value="P:mismatch repair"/>
    <property type="evidence" value="ECO:0000318"/>
    <property type="project" value="GO_Central"/>
</dbReference>
<dbReference type="FunFam" id="3.40.1170.10:FF:000001">
    <property type="entry name" value="DNA mismatch repair protein MutS"/>
    <property type="match status" value="1"/>
</dbReference>
<dbReference type="FunFam" id="3.40.50.300:FF:001974">
    <property type="entry name" value="DNA mismatch repair protein MutS"/>
    <property type="match status" value="1"/>
</dbReference>
<dbReference type="Gene3D" id="1.10.1420.10">
    <property type="match status" value="2"/>
</dbReference>
<dbReference type="Gene3D" id="3.40.1170.10">
    <property type="entry name" value="DNA repair protein MutS, domain I"/>
    <property type="match status" value="1"/>
</dbReference>
<dbReference type="Gene3D" id="3.30.420.110">
    <property type="entry name" value="MutS, connector domain"/>
    <property type="match status" value="1"/>
</dbReference>
<dbReference type="Gene3D" id="3.40.50.300">
    <property type="entry name" value="P-loop containing nucleotide triphosphate hydrolases"/>
    <property type="match status" value="1"/>
</dbReference>
<dbReference type="HAMAP" id="MF_00096">
    <property type="entry name" value="MutS"/>
    <property type="match status" value="1"/>
</dbReference>
<dbReference type="InterPro" id="IPR005748">
    <property type="entry name" value="DNA_mismatch_repair_MutS"/>
</dbReference>
<dbReference type="InterPro" id="IPR007695">
    <property type="entry name" value="DNA_mismatch_repair_MutS-lik_N"/>
</dbReference>
<dbReference type="InterPro" id="IPR017261">
    <property type="entry name" value="DNA_mismatch_repair_MutS/MSH"/>
</dbReference>
<dbReference type="InterPro" id="IPR000432">
    <property type="entry name" value="DNA_mismatch_repair_MutS_C"/>
</dbReference>
<dbReference type="InterPro" id="IPR007861">
    <property type="entry name" value="DNA_mismatch_repair_MutS_clamp"/>
</dbReference>
<dbReference type="InterPro" id="IPR007696">
    <property type="entry name" value="DNA_mismatch_repair_MutS_core"/>
</dbReference>
<dbReference type="InterPro" id="IPR016151">
    <property type="entry name" value="DNA_mismatch_repair_MutS_N"/>
</dbReference>
<dbReference type="InterPro" id="IPR036187">
    <property type="entry name" value="DNA_mismatch_repair_MutS_sf"/>
</dbReference>
<dbReference type="InterPro" id="IPR007860">
    <property type="entry name" value="DNA_mmatch_repair_MutS_con_dom"/>
</dbReference>
<dbReference type="InterPro" id="IPR045076">
    <property type="entry name" value="MutS"/>
</dbReference>
<dbReference type="InterPro" id="IPR036678">
    <property type="entry name" value="MutS_con_dom_sf"/>
</dbReference>
<dbReference type="InterPro" id="IPR027417">
    <property type="entry name" value="P-loop_NTPase"/>
</dbReference>
<dbReference type="NCBIfam" id="TIGR01070">
    <property type="entry name" value="mutS1"/>
    <property type="match status" value="1"/>
</dbReference>
<dbReference type="NCBIfam" id="NF003810">
    <property type="entry name" value="PRK05399.1"/>
    <property type="match status" value="1"/>
</dbReference>
<dbReference type="PANTHER" id="PTHR11361:SF34">
    <property type="entry name" value="DNA MISMATCH REPAIR PROTEIN MSH1, MITOCHONDRIAL"/>
    <property type="match status" value="1"/>
</dbReference>
<dbReference type="PANTHER" id="PTHR11361">
    <property type="entry name" value="DNA MISMATCH REPAIR PROTEIN MUTS FAMILY MEMBER"/>
    <property type="match status" value="1"/>
</dbReference>
<dbReference type="Pfam" id="PF01624">
    <property type="entry name" value="MutS_I"/>
    <property type="match status" value="1"/>
</dbReference>
<dbReference type="Pfam" id="PF05188">
    <property type="entry name" value="MutS_II"/>
    <property type="match status" value="1"/>
</dbReference>
<dbReference type="Pfam" id="PF05192">
    <property type="entry name" value="MutS_III"/>
    <property type="match status" value="1"/>
</dbReference>
<dbReference type="Pfam" id="PF05190">
    <property type="entry name" value="MutS_IV"/>
    <property type="match status" value="1"/>
</dbReference>
<dbReference type="Pfam" id="PF00488">
    <property type="entry name" value="MutS_V"/>
    <property type="match status" value="1"/>
</dbReference>
<dbReference type="PIRSF" id="PIRSF037677">
    <property type="entry name" value="DNA_mis_repair_Msh6"/>
    <property type="match status" value="1"/>
</dbReference>
<dbReference type="SMART" id="SM00534">
    <property type="entry name" value="MUTSac"/>
    <property type="match status" value="1"/>
</dbReference>
<dbReference type="SMART" id="SM00533">
    <property type="entry name" value="MUTSd"/>
    <property type="match status" value="1"/>
</dbReference>
<dbReference type="SUPFAM" id="SSF55271">
    <property type="entry name" value="DNA repair protein MutS, domain I"/>
    <property type="match status" value="1"/>
</dbReference>
<dbReference type="SUPFAM" id="SSF53150">
    <property type="entry name" value="DNA repair protein MutS, domain II"/>
    <property type="match status" value="1"/>
</dbReference>
<dbReference type="SUPFAM" id="SSF48334">
    <property type="entry name" value="DNA repair protein MutS, domain III"/>
    <property type="match status" value="1"/>
</dbReference>
<dbReference type="SUPFAM" id="SSF52540">
    <property type="entry name" value="P-loop containing nucleoside triphosphate hydrolases"/>
    <property type="match status" value="1"/>
</dbReference>
<dbReference type="PROSITE" id="PS00486">
    <property type="entry name" value="DNA_MISMATCH_REPAIR_2"/>
    <property type="match status" value="1"/>
</dbReference>
<protein>
    <recommendedName>
        <fullName evidence="1">DNA mismatch repair protein MutS</fullName>
    </recommendedName>
</protein>
<accession>Q8F496</accession>
<keyword id="KW-0067">ATP-binding</keyword>
<keyword id="KW-0227">DNA damage</keyword>
<keyword id="KW-0234">DNA repair</keyword>
<keyword id="KW-0238">DNA-binding</keyword>
<keyword id="KW-0547">Nucleotide-binding</keyword>
<keyword id="KW-1185">Reference proteome</keyword>
<organism>
    <name type="scientific">Leptospira interrogans serogroup Icterohaemorrhagiae serovar Lai (strain 56601)</name>
    <dbReference type="NCBI Taxonomy" id="189518"/>
    <lineage>
        <taxon>Bacteria</taxon>
        <taxon>Pseudomonadati</taxon>
        <taxon>Spirochaetota</taxon>
        <taxon>Spirochaetia</taxon>
        <taxon>Leptospirales</taxon>
        <taxon>Leptospiraceae</taxon>
        <taxon>Leptospira</taxon>
    </lineage>
</organism>
<gene>
    <name evidence="1" type="primary">mutS</name>
    <name type="synonym">mutS1</name>
    <name type="ordered locus">LA_2146</name>
</gene>
<sequence length="848" mass="97182">MNLESTATSAEYWSDLADALNTPMMKQFLAIKKDFPDTILFFRMGDFYEMFLEDAKIASSILDIALTKRQNAVPMCGIPYHSKDNYISRLLNAGKKIAICEQSKPEEAGSKLMTRDVVRIITPGTVIEENLLSGFQNNYLAVLHLKKSLIYFAIADFSTGEVFYSSVSVTGLERLIAELEKFKPSEICVPKSEHTFFQELEYFKNREFTVLKNQIETSEKDSFQVLSKYLNEYIRETYRDNKLVLREPKILSSGKFLEMDRETIRNLELVENEKEKNNTLYSIFNFCNTAKGKRLLKQRILFPECDPVVLYSRWEKQDILLKTVLAPYITALKDFGDLERILTRFRGNHAYPRDFRSLLNSISSGIKLKEELEKVSYPFLIPIEELKKISDFIQERLHPGDDLPVILGNGIFLKKGFSQKLDQAREAGVKGKDWILDLETKEKKRTGLNTLKIRYNKIVGYFIEISRAQAEQAPKDYLKKQTLVGSERFTMPKLEEIERTILEADEIIQEIERTEFNRMVEEVLKFSSSLLSFSEEIGDLDFQISLLTAKDKFGWIRPKLSEDRSLDLSDSRHPVVEATLPPGQEFIPNSVYLDTQDKAIAVLTGPNMAGKSTFMRQIALNQILFQIGAFVPAKSAKLPIVDKLFTRIGAGDNLTAGESTFFVEMKETANILNHYTEDSLILFDEVGRGTSTYDGMSIAWSILEYLSSLSVRPKTIFATHYHELTELSRLGGIFNLYLETLEKEDRVLFLRKVKVGKAKKSFGIYVAKIAGVPEPIVKRAAELLTDLESKKKEIKIQEAQPTLFTEPETKNFNSQTEESILKLKLEEMTPIEALKTLEDFQKKLRKQK</sequence>
<comment type="function">
    <text evidence="1">This protein is involved in the repair of mismatches in DNA. It is possible that it carries out the mismatch recognition step. This protein has a weak ATPase activity.</text>
</comment>
<comment type="similarity">
    <text evidence="1">Belongs to the DNA mismatch repair MutS family.</text>
</comment>